<organism>
    <name type="scientific">Magnetococcus marinus (strain ATCC BAA-1437 / JCM 17883 / MC-1)</name>
    <dbReference type="NCBI Taxonomy" id="156889"/>
    <lineage>
        <taxon>Bacteria</taxon>
        <taxon>Pseudomonadati</taxon>
        <taxon>Pseudomonadota</taxon>
        <taxon>Alphaproteobacteria</taxon>
        <taxon>Magnetococcales</taxon>
        <taxon>Magnetococcaceae</taxon>
        <taxon>Magnetococcus</taxon>
    </lineage>
</organism>
<accession>A0LDN3</accession>
<protein>
    <recommendedName>
        <fullName evidence="1">4-hydroxy-3-methylbut-2-en-1-yl diphosphate synthase (flavodoxin)</fullName>
        <ecNumber evidence="1">1.17.7.3</ecNumber>
    </recommendedName>
    <alternativeName>
        <fullName evidence="1">1-hydroxy-2-methyl-2-(E)-butenyl 4-diphosphate synthase</fullName>
    </alternativeName>
</protein>
<comment type="function">
    <text evidence="1">Converts 2C-methyl-D-erythritol 2,4-cyclodiphosphate (ME-2,4cPP) into 1-hydroxy-2-methyl-2-(E)-butenyl 4-diphosphate.</text>
</comment>
<comment type="catalytic activity">
    <reaction evidence="1">
        <text>(2E)-4-hydroxy-3-methylbut-2-enyl diphosphate + oxidized [flavodoxin] + H2O + 2 H(+) = 2-C-methyl-D-erythritol 2,4-cyclic diphosphate + reduced [flavodoxin]</text>
        <dbReference type="Rhea" id="RHEA:43604"/>
        <dbReference type="Rhea" id="RHEA-COMP:10622"/>
        <dbReference type="Rhea" id="RHEA-COMP:10623"/>
        <dbReference type="ChEBI" id="CHEBI:15377"/>
        <dbReference type="ChEBI" id="CHEBI:15378"/>
        <dbReference type="ChEBI" id="CHEBI:57618"/>
        <dbReference type="ChEBI" id="CHEBI:58210"/>
        <dbReference type="ChEBI" id="CHEBI:58483"/>
        <dbReference type="ChEBI" id="CHEBI:128753"/>
        <dbReference type="EC" id="1.17.7.3"/>
    </reaction>
</comment>
<comment type="cofactor">
    <cofactor evidence="1">
        <name>[4Fe-4S] cluster</name>
        <dbReference type="ChEBI" id="CHEBI:49883"/>
    </cofactor>
    <text evidence="1">Binds 1 [4Fe-4S] cluster.</text>
</comment>
<comment type="pathway">
    <text evidence="1">Isoprenoid biosynthesis; isopentenyl diphosphate biosynthesis via DXP pathway; isopentenyl diphosphate from 1-deoxy-D-xylulose 5-phosphate: step 5/6.</text>
</comment>
<comment type="similarity">
    <text evidence="1">Belongs to the IspG family.</text>
</comment>
<proteinExistence type="inferred from homology"/>
<feature type="chain" id="PRO_1000011481" description="4-hydroxy-3-methylbut-2-en-1-yl diphosphate synthase (flavodoxin)">
    <location>
        <begin position="1"/>
        <end position="371"/>
    </location>
</feature>
<feature type="binding site" evidence="1">
    <location>
        <position position="272"/>
    </location>
    <ligand>
        <name>[4Fe-4S] cluster</name>
        <dbReference type="ChEBI" id="CHEBI:49883"/>
    </ligand>
</feature>
<feature type="binding site" evidence="1">
    <location>
        <position position="275"/>
    </location>
    <ligand>
        <name>[4Fe-4S] cluster</name>
        <dbReference type="ChEBI" id="CHEBI:49883"/>
    </ligand>
</feature>
<feature type="binding site" evidence="1">
    <location>
        <position position="307"/>
    </location>
    <ligand>
        <name>[4Fe-4S] cluster</name>
        <dbReference type="ChEBI" id="CHEBI:49883"/>
    </ligand>
</feature>
<feature type="binding site" evidence="1">
    <location>
        <position position="314"/>
    </location>
    <ligand>
        <name>[4Fe-4S] cluster</name>
        <dbReference type="ChEBI" id="CHEBI:49883"/>
    </ligand>
</feature>
<dbReference type="EC" id="1.17.7.3" evidence="1"/>
<dbReference type="EMBL" id="CP000471">
    <property type="protein sequence ID" value="ABK46076.1"/>
    <property type="molecule type" value="Genomic_DNA"/>
</dbReference>
<dbReference type="RefSeq" id="WP_011715132.1">
    <property type="nucleotide sequence ID" value="NC_008576.1"/>
</dbReference>
<dbReference type="SMR" id="A0LDN3"/>
<dbReference type="STRING" id="156889.Mmc1_3591"/>
<dbReference type="KEGG" id="mgm:Mmc1_3591"/>
<dbReference type="eggNOG" id="COG0821">
    <property type="taxonomic scope" value="Bacteria"/>
</dbReference>
<dbReference type="HOGENOM" id="CLU_042258_0_0_5"/>
<dbReference type="OrthoDB" id="9803214at2"/>
<dbReference type="UniPathway" id="UPA00056">
    <property type="reaction ID" value="UER00096"/>
</dbReference>
<dbReference type="Proteomes" id="UP000002586">
    <property type="component" value="Chromosome"/>
</dbReference>
<dbReference type="GO" id="GO:0051539">
    <property type="term" value="F:4 iron, 4 sulfur cluster binding"/>
    <property type="evidence" value="ECO:0007669"/>
    <property type="project" value="UniProtKB-UniRule"/>
</dbReference>
<dbReference type="GO" id="GO:0046429">
    <property type="term" value="F:4-hydroxy-3-methylbut-2-en-1-yl diphosphate synthase activity (ferredoxin)"/>
    <property type="evidence" value="ECO:0007669"/>
    <property type="project" value="UniProtKB-UniRule"/>
</dbReference>
<dbReference type="GO" id="GO:0141197">
    <property type="term" value="F:4-hydroxy-3-methylbut-2-enyl-diphosphate synthase activity (flavodoxin)"/>
    <property type="evidence" value="ECO:0007669"/>
    <property type="project" value="UniProtKB-EC"/>
</dbReference>
<dbReference type="GO" id="GO:0005506">
    <property type="term" value="F:iron ion binding"/>
    <property type="evidence" value="ECO:0007669"/>
    <property type="project" value="InterPro"/>
</dbReference>
<dbReference type="GO" id="GO:0019288">
    <property type="term" value="P:isopentenyl diphosphate biosynthetic process, methylerythritol 4-phosphate pathway"/>
    <property type="evidence" value="ECO:0007669"/>
    <property type="project" value="UniProtKB-UniRule"/>
</dbReference>
<dbReference type="GO" id="GO:0016114">
    <property type="term" value="P:terpenoid biosynthetic process"/>
    <property type="evidence" value="ECO:0007669"/>
    <property type="project" value="InterPro"/>
</dbReference>
<dbReference type="FunFam" id="3.20.20.20:FF:000001">
    <property type="entry name" value="4-hydroxy-3-methylbut-2-en-1-yl diphosphate synthase (flavodoxin)"/>
    <property type="match status" value="1"/>
</dbReference>
<dbReference type="Gene3D" id="3.20.20.20">
    <property type="entry name" value="Dihydropteroate synthase-like"/>
    <property type="match status" value="1"/>
</dbReference>
<dbReference type="Gene3D" id="3.30.413.10">
    <property type="entry name" value="Sulfite Reductase Hemoprotein, domain 1"/>
    <property type="match status" value="1"/>
</dbReference>
<dbReference type="HAMAP" id="MF_00159">
    <property type="entry name" value="IspG"/>
    <property type="match status" value="1"/>
</dbReference>
<dbReference type="InterPro" id="IPR011005">
    <property type="entry name" value="Dihydropteroate_synth-like_sf"/>
</dbReference>
<dbReference type="InterPro" id="IPR016425">
    <property type="entry name" value="IspG_bac"/>
</dbReference>
<dbReference type="InterPro" id="IPR004588">
    <property type="entry name" value="IspG_bac-typ"/>
</dbReference>
<dbReference type="InterPro" id="IPR045854">
    <property type="entry name" value="NO2/SO3_Rdtase_4Fe4S_sf"/>
</dbReference>
<dbReference type="NCBIfam" id="TIGR00612">
    <property type="entry name" value="ispG_gcpE"/>
    <property type="match status" value="1"/>
</dbReference>
<dbReference type="NCBIfam" id="NF001540">
    <property type="entry name" value="PRK00366.1"/>
    <property type="match status" value="1"/>
</dbReference>
<dbReference type="PANTHER" id="PTHR30454">
    <property type="entry name" value="4-HYDROXY-3-METHYLBUT-2-EN-1-YL DIPHOSPHATE SYNTHASE"/>
    <property type="match status" value="1"/>
</dbReference>
<dbReference type="PANTHER" id="PTHR30454:SF0">
    <property type="entry name" value="4-HYDROXY-3-METHYLBUT-2-EN-1-YL DIPHOSPHATE SYNTHASE (FERREDOXIN), CHLOROPLASTIC"/>
    <property type="match status" value="1"/>
</dbReference>
<dbReference type="Pfam" id="PF04551">
    <property type="entry name" value="GcpE"/>
    <property type="match status" value="1"/>
</dbReference>
<dbReference type="PIRSF" id="PIRSF004640">
    <property type="entry name" value="IspG"/>
    <property type="match status" value="1"/>
</dbReference>
<dbReference type="SUPFAM" id="SSF51717">
    <property type="entry name" value="Dihydropteroate synthetase-like"/>
    <property type="match status" value="1"/>
</dbReference>
<dbReference type="SUPFAM" id="SSF56014">
    <property type="entry name" value="Nitrite and sulphite reductase 4Fe-4S domain-like"/>
    <property type="match status" value="1"/>
</dbReference>
<reference key="1">
    <citation type="journal article" date="2009" name="Appl. Environ. Microbiol.">
        <title>Complete genome sequence of the chemolithoautotrophic marine magnetotactic coccus strain MC-1.</title>
        <authorList>
            <person name="Schubbe S."/>
            <person name="Williams T.J."/>
            <person name="Xie G."/>
            <person name="Kiss H.E."/>
            <person name="Brettin T.S."/>
            <person name="Martinez D."/>
            <person name="Ross C.A."/>
            <person name="Schuler D."/>
            <person name="Cox B.L."/>
            <person name="Nealson K.H."/>
            <person name="Bazylinski D.A."/>
        </authorList>
    </citation>
    <scope>NUCLEOTIDE SEQUENCE [LARGE SCALE GENOMIC DNA]</scope>
    <source>
        <strain>ATCC BAA-1437 / JCM 17883 / MC-1</strain>
    </source>
</reference>
<gene>
    <name evidence="1" type="primary">ispG</name>
    <name type="ordered locus">Mmc1_3591</name>
</gene>
<keyword id="KW-0004">4Fe-4S</keyword>
<keyword id="KW-0408">Iron</keyword>
<keyword id="KW-0411">Iron-sulfur</keyword>
<keyword id="KW-0414">Isoprene biosynthesis</keyword>
<keyword id="KW-0479">Metal-binding</keyword>
<keyword id="KW-0560">Oxidoreductase</keyword>
<keyword id="KW-1185">Reference proteome</keyword>
<sequence length="371" mass="39312">MAHTVSLVAPRRQTRPVQVGSVQVGGDAPISVQSMTNTDTRDLPATLAQIHAIAQAGADLVRVSCPDMASAEAVKALVAQAPVPLIADIHFDHRLALKALACGIHCLRINPGNIGSTARVQEVVAAARERCVPIRIGVNAGSLEKQLLEKYGEPCAEAMVESALHHIHILEDLNYPEIKVSLKASDVGMTVMAYRQLASKVNYPLHLGITEAGGMRSGSVKSAIGLGLLLAEGIGDTLRVSLSADPVEEIKVGFDILKSLGLRSLGVNIIACPTCARQEFKVIDVVAELERRLAHIREPVTLSIIGCVVNGPGEAKETMVGVVGGQGENLLYQHGQTIGKRGDAELVETVVEQVEAIAQQMRAAKEKAEAE</sequence>
<name>ISPG_MAGMM</name>
<evidence type="ECO:0000255" key="1">
    <source>
        <dbReference type="HAMAP-Rule" id="MF_00159"/>
    </source>
</evidence>